<organism>
    <name type="scientific">Caldicellulosiruptor saccharolyticus</name>
    <name type="common">Caldocellum saccharolyticum</name>
    <dbReference type="NCBI Taxonomy" id="44001"/>
    <lineage>
        <taxon>Bacteria</taxon>
        <taxon>Bacillati</taxon>
        <taxon>Bacillota</taxon>
        <taxon>Bacillota incertae sedis</taxon>
        <taxon>Caldicellulosiruptorales</taxon>
        <taxon>Caldicellulosiruptoraceae</taxon>
        <taxon>Caldicellulosiruptor</taxon>
    </lineage>
</organism>
<dbReference type="EC" id="3.2.1.8"/>
<dbReference type="EMBL" id="M34459">
    <property type="protein sequence ID" value="AAA23059.1"/>
    <property type="molecule type" value="Genomic_DNA"/>
</dbReference>
<dbReference type="EMBL" id="AF005383">
    <property type="protein sequence ID" value="AAB87374.1"/>
    <property type="molecule type" value="Genomic_DNA"/>
</dbReference>
<dbReference type="PIR" id="A37202">
    <property type="entry name" value="A60154"/>
</dbReference>
<dbReference type="SMR" id="P23556"/>
<dbReference type="CAZy" id="GH10">
    <property type="family name" value="Glycoside Hydrolase Family 10"/>
</dbReference>
<dbReference type="UniPathway" id="UPA00114"/>
<dbReference type="GO" id="GO:0005737">
    <property type="term" value="C:cytoplasm"/>
    <property type="evidence" value="ECO:0007669"/>
    <property type="project" value="UniProtKB-SubCell"/>
</dbReference>
<dbReference type="GO" id="GO:0031176">
    <property type="term" value="F:endo-1,4-beta-xylanase activity"/>
    <property type="evidence" value="ECO:0007669"/>
    <property type="project" value="UniProtKB-EC"/>
</dbReference>
<dbReference type="GO" id="GO:0045493">
    <property type="term" value="P:xylan catabolic process"/>
    <property type="evidence" value="ECO:0007669"/>
    <property type="project" value="UniProtKB-UniPathway"/>
</dbReference>
<dbReference type="Gene3D" id="3.20.20.80">
    <property type="entry name" value="Glycosidases"/>
    <property type="match status" value="1"/>
</dbReference>
<dbReference type="InterPro" id="IPR044846">
    <property type="entry name" value="GH10"/>
</dbReference>
<dbReference type="InterPro" id="IPR031158">
    <property type="entry name" value="GH10_AS"/>
</dbReference>
<dbReference type="InterPro" id="IPR001000">
    <property type="entry name" value="GH10_dom"/>
</dbReference>
<dbReference type="InterPro" id="IPR017853">
    <property type="entry name" value="Glycoside_hydrolase_SF"/>
</dbReference>
<dbReference type="PANTHER" id="PTHR31490:SF90">
    <property type="entry name" value="ENDO-1,4-BETA-XYLANASE A"/>
    <property type="match status" value="1"/>
</dbReference>
<dbReference type="PANTHER" id="PTHR31490">
    <property type="entry name" value="GLYCOSYL HYDROLASE"/>
    <property type="match status" value="1"/>
</dbReference>
<dbReference type="Pfam" id="PF00331">
    <property type="entry name" value="Glyco_hydro_10"/>
    <property type="match status" value="1"/>
</dbReference>
<dbReference type="PRINTS" id="PR00134">
    <property type="entry name" value="GLHYDRLASE10"/>
</dbReference>
<dbReference type="SMART" id="SM00633">
    <property type="entry name" value="Glyco_10"/>
    <property type="match status" value="1"/>
</dbReference>
<dbReference type="SUPFAM" id="SSF51445">
    <property type="entry name" value="(Trans)glycosidases"/>
    <property type="match status" value="1"/>
</dbReference>
<dbReference type="PROSITE" id="PS00591">
    <property type="entry name" value="GH10_1"/>
    <property type="match status" value="1"/>
</dbReference>
<dbReference type="PROSITE" id="PS51760">
    <property type="entry name" value="GH10_2"/>
    <property type="match status" value="1"/>
</dbReference>
<evidence type="ECO:0000250" key="1"/>
<evidence type="ECO:0000255" key="2">
    <source>
        <dbReference type="PROSITE-ProRule" id="PRU01096"/>
    </source>
</evidence>
<evidence type="ECO:0000255" key="3">
    <source>
        <dbReference type="PROSITE-ProRule" id="PRU10061"/>
    </source>
</evidence>
<evidence type="ECO:0000305" key="4"/>
<protein>
    <recommendedName>
        <fullName>Endo-1,4-beta-xylanase A</fullName>
        <shortName>Xylanase A</shortName>
        <ecNumber>3.2.1.8</ecNumber>
    </recommendedName>
    <alternativeName>
        <fullName>1,4-beta-D-xylan xylanohydrolase A</fullName>
    </alternativeName>
</protein>
<accession>P23556</accession>
<name>XYNA_CALSA</name>
<reference key="1">
    <citation type="journal article" date="1990" name="Appl. Environ. Microbiol.">
        <title>Cloning, sequence analysis, and expression of genes encoding xylan-degrading enzymes from the thermophile 'Caldocellum saccharolyticum'.</title>
        <authorList>
            <person name="Luethi E."/>
            <person name="Love D.R."/>
            <person name="McAnulty J."/>
            <person name="Wallace C."/>
            <person name="Caughey P.A."/>
            <person name="Saul D.J."/>
            <person name="Bergquist P.L."/>
        </authorList>
    </citation>
    <scope>NUCLEOTIDE SEQUENCE [GENOMIC DNA]</scope>
</reference>
<reference key="2">
    <citation type="submission" date="1997-05" db="EMBL/GenBank/DDBJ databases">
        <title>A cluster of genes involved in xylan degradation cloned from the extreme thermophile Caldicellulosiruptor saccharolyticus.</title>
        <authorList>
            <person name="Te'O V.S. Jr."/>
            <person name="Gibbs M.D."/>
            <person name="Saul D.J."/>
            <person name="Bergquist P.L."/>
        </authorList>
    </citation>
    <scope>NUCLEOTIDE SEQUENCE [GENOMIC DNA]</scope>
</reference>
<reference key="3">
    <citation type="journal article" date="1990" name="Appl. Environ. Microbiol.">
        <title>Xylanase from the extremely thermophilic bacterium 'Caldocellum saccharolyticum': overexpression of the gene in Escherichia coli and characterization of the gene product.</title>
        <authorList>
            <person name="Luethi E."/>
            <person name="Jasmat N.B."/>
            <person name="Bergquist P.L."/>
        </authorList>
    </citation>
    <scope>CHARACTERIZATION</scope>
</reference>
<comment type="catalytic activity">
    <reaction>
        <text>Endohydrolysis of (1-&gt;4)-beta-D-xylosidic linkages in xylans.</text>
        <dbReference type="EC" id="3.2.1.8"/>
    </reaction>
</comment>
<comment type="biophysicochemical properties">
    <phDependence>
        <text>Optimum pH is 5.5-6.0.</text>
    </phDependence>
    <temperatureDependence>
        <text>Optimum temperature is 70 degrees Celsius.</text>
    </temperatureDependence>
</comment>
<comment type="pathway">
    <text>Glycan degradation; xylan degradation.</text>
</comment>
<comment type="subcellular location">
    <subcellularLocation>
        <location evidence="1">Cytoplasm</location>
    </subcellularLocation>
</comment>
<comment type="similarity">
    <text evidence="4">Belongs to the glycosyl hydrolase 10 (cellulase F) family. Cytoplasmic xylanase subfamily.</text>
</comment>
<feature type="chain" id="PRO_0000007984" description="Endo-1,4-beta-xylanase A">
    <location>
        <begin position="1"/>
        <end position="342"/>
    </location>
</feature>
<feature type="domain" description="GH10" evidence="2">
    <location>
        <begin position="11"/>
        <end position="342"/>
    </location>
</feature>
<feature type="active site" description="Proton donor" evidence="1">
    <location>
        <position position="144"/>
    </location>
</feature>
<feature type="active site" description="Nucleophile" evidence="3">
    <location>
        <position position="252"/>
    </location>
</feature>
<proteinExistence type="evidence at protein level"/>
<sequence>MRCLIVCENLEMLNLSLAKTYKDYFKIGAAVTAKDLEGVHRDILLKHFNSLTPENAMKFENIHPEEQRYNFEEVARIKEFAIKNDMKLRGHTFVWHNQTPGWVFLDKNGEEASKELVIERLREHIKTLCERYKDVVYAWDVVNEAVEDKTEKLLRESNWRKIIGDDYIKIAFEIAREYAGDAKLFYNDYNNEMPYKLEKTYKVLKELLERGTPIDGIGIQAHWNIWDKNLVSNLKKAIEVYASLGLEIHITELDISVFEFEDKRTDLFEPTPEMLELQAKVYEDVFAVFREYKDVITSVTLWGISDRHTWKDNFPVKGRKDWPLLFDVNGKPKEALYRILRF</sequence>
<keyword id="KW-0119">Carbohydrate metabolism</keyword>
<keyword id="KW-0963">Cytoplasm</keyword>
<keyword id="KW-0326">Glycosidase</keyword>
<keyword id="KW-0378">Hydrolase</keyword>
<keyword id="KW-0624">Polysaccharide degradation</keyword>
<keyword id="KW-0858">Xylan degradation</keyword>
<gene>
    <name type="primary">xynA</name>
</gene>